<sequence>MTTRYKMTMAYDGHLFHGFQLQPDQRTVQGTVEDALKKMTKGKRIIVQGSGRTDAGVHAIGQVIHFDYPGKTIPANRMILALNSMMPTDIIFNNCEIVNENFHARYSIKGKWYRYRVSLDHFVNPFKRFYTGHFSYALDVGKMQEAAKDLLGKHDFTSFAASGGQIEDKVRTIYYVNIAKDEKENEIVFDFIGSGFLYNMVRIMVAALLEIGNGRRPVHDLKRVIAAKDRQEVRQTAQASGLYLYHVFYDEYHKNIDRTGIYN</sequence>
<reference key="1">
    <citation type="journal article" date="2008" name="J. Bacteriol.">
        <title>Genome sequence of Lactobacillus helveticus: an organism distinguished by selective gene loss and IS element expansion.</title>
        <authorList>
            <person name="Callanan M."/>
            <person name="Kaleta P."/>
            <person name="O'Callaghan J."/>
            <person name="O'Sullivan O."/>
            <person name="Jordan K."/>
            <person name="McAuliffe O."/>
            <person name="Sangrador-Vegas A."/>
            <person name="Slattery L."/>
            <person name="Fitzgerald G.F."/>
            <person name="Beresford T."/>
            <person name="Ross R.P."/>
        </authorList>
    </citation>
    <scope>NUCLEOTIDE SEQUENCE [LARGE SCALE GENOMIC DNA]</scope>
    <source>
        <strain>DPC 4571</strain>
    </source>
</reference>
<protein>
    <recommendedName>
        <fullName evidence="1">tRNA pseudouridine synthase A</fullName>
        <ecNumber evidence="1">5.4.99.12</ecNumber>
    </recommendedName>
    <alternativeName>
        <fullName evidence="1">tRNA pseudouridine(38-40) synthase</fullName>
    </alternativeName>
    <alternativeName>
        <fullName evidence="1">tRNA pseudouridylate synthase I</fullName>
    </alternativeName>
    <alternativeName>
        <fullName evidence="1">tRNA-uridine isomerase I</fullName>
    </alternativeName>
</protein>
<gene>
    <name evidence="1" type="primary">truA</name>
    <name type="ordered locus">lhv_0342</name>
</gene>
<accession>A8YTB0</accession>
<comment type="function">
    <text evidence="1">Formation of pseudouridine at positions 38, 39 and 40 in the anticodon stem and loop of transfer RNAs.</text>
</comment>
<comment type="catalytic activity">
    <reaction evidence="1">
        <text>uridine(38/39/40) in tRNA = pseudouridine(38/39/40) in tRNA</text>
        <dbReference type="Rhea" id="RHEA:22376"/>
        <dbReference type="Rhea" id="RHEA-COMP:10085"/>
        <dbReference type="Rhea" id="RHEA-COMP:10087"/>
        <dbReference type="ChEBI" id="CHEBI:65314"/>
        <dbReference type="ChEBI" id="CHEBI:65315"/>
        <dbReference type="EC" id="5.4.99.12"/>
    </reaction>
</comment>
<comment type="subunit">
    <text evidence="1">Homodimer.</text>
</comment>
<comment type="similarity">
    <text evidence="1">Belongs to the tRNA pseudouridine synthase TruA family.</text>
</comment>
<organism>
    <name type="scientific">Lactobacillus helveticus (strain DPC 4571)</name>
    <dbReference type="NCBI Taxonomy" id="405566"/>
    <lineage>
        <taxon>Bacteria</taxon>
        <taxon>Bacillati</taxon>
        <taxon>Bacillota</taxon>
        <taxon>Bacilli</taxon>
        <taxon>Lactobacillales</taxon>
        <taxon>Lactobacillaceae</taxon>
        <taxon>Lactobacillus</taxon>
    </lineage>
</organism>
<evidence type="ECO:0000255" key="1">
    <source>
        <dbReference type="HAMAP-Rule" id="MF_00171"/>
    </source>
</evidence>
<dbReference type="EC" id="5.4.99.12" evidence="1"/>
<dbReference type="EMBL" id="CP000517">
    <property type="protein sequence ID" value="ABX26566.1"/>
    <property type="molecule type" value="Genomic_DNA"/>
</dbReference>
<dbReference type="SMR" id="A8YTB0"/>
<dbReference type="KEGG" id="lhe:lhv_0342"/>
<dbReference type="eggNOG" id="COG0101">
    <property type="taxonomic scope" value="Bacteria"/>
</dbReference>
<dbReference type="HOGENOM" id="CLU_014673_0_1_9"/>
<dbReference type="Proteomes" id="UP000000790">
    <property type="component" value="Chromosome"/>
</dbReference>
<dbReference type="GO" id="GO:0003723">
    <property type="term" value="F:RNA binding"/>
    <property type="evidence" value="ECO:0007669"/>
    <property type="project" value="InterPro"/>
</dbReference>
<dbReference type="GO" id="GO:0160147">
    <property type="term" value="F:tRNA pseudouridine(38-40) synthase activity"/>
    <property type="evidence" value="ECO:0007669"/>
    <property type="project" value="UniProtKB-EC"/>
</dbReference>
<dbReference type="GO" id="GO:0031119">
    <property type="term" value="P:tRNA pseudouridine synthesis"/>
    <property type="evidence" value="ECO:0007669"/>
    <property type="project" value="UniProtKB-UniRule"/>
</dbReference>
<dbReference type="CDD" id="cd02570">
    <property type="entry name" value="PseudoU_synth_EcTruA"/>
    <property type="match status" value="1"/>
</dbReference>
<dbReference type="FunFam" id="3.30.70.580:FF:000001">
    <property type="entry name" value="tRNA pseudouridine synthase A"/>
    <property type="match status" value="1"/>
</dbReference>
<dbReference type="Gene3D" id="3.30.70.660">
    <property type="entry name" value="Pseudouridine synthase I, catalytic domain, C-terminal subdomain"/>
    <property type="match status" value="1"/>
</dbReference>
<dbReference type="Gene3D" id="3.30.70.580">
    <property type="entry name" value="Pseudouridine synthase I, catalytic domain, N-terminal subdomain"/>
    <property type="match status" value="1"/>
</dbReference>
<dbReference type="HAMAP" id="MF_00171">
    <property type="entry name" value="TruA"/>
    <property type="match status" value="1"/>
</dbReference>
<dbReference type="InterPro" id="IPR020103">
    <property type="entry name" value="PsdUridine_synth_cat_dom_sf"/>
</dbReference>
<dbReference type="InterPro" id="IPR001406">
    <property type="entry name" value="PsdUridine_synth_TruA"/>
</dbReference>
<dbReference type="InterPro" id="IPR020097">
    <property type="entry name" value="PsdUridine_synth_TruA_a/b_dom"/>
</dbReference>
<dbReference type="InterPro" id="IPR020095">
    <property type="entry name" value="PsdUridine_synth_TruA_C"/>
</dbReference>
<dbReference type="InterPro" id="IPR020094">
    <property type="entry name" value="TruA/RsuA/RluB/E/F_N"/>
</dbReference>
<dbReference type="NCBIfam" id="TIGR00071">
    <property type="entry name" value="hisT_truA"/>
    <property type="match status" value="1"/>
</dbReference>
<dbReference type="PANTHER" id="PTHR11142">
    <property type="entry name" value="PSEUDOURIDYLATE SYNTHASE"/>
    <property type="match status" value="1"/>
</dbReference>
<dbReference type="PANTHER" id="PTHR11142:SF0">
    <property type="entry name" value="TRNA PSEUDOURIDINE SYNTHASE-LIKE 1"/>
    <property type="match status" value="1"/>
</dbReference>
<dbReference type="Pfam" id="PF01416">
    <property type="entry name" value="PseudoU_synth_1"/>
    <property type="match status" value="2"/>
</dbReference>
<dbReference type="PIRSF" id="PIRSF001430">
    <property type="entry name" value="tRNA_psdUrid_synth"/>
    <property type="match status" value="1"/>
</dbReference>
<dbReference type="SUPFAM" id="SSF55120">
    <property type="entry name" value="Pseudouridine synthase"/>
    <property type="match status" value="1"/>
</dbReference>
<keyword id="KW-0413">Isomerase</keyword>
<keyword id="KW-0819">tRNA processing</keyword>
<feature type="chain" id="PRO_1000071595" description="tRNA pseudouridine synthase A">
    <location>
        <begin position="1"/>
        <end position="263"/>
    </location>
</feature>
<feature type="active site" description="Nucleophile" evidence="1">
    <location>
        <position position="54"/>
    </location>
</feature>
<feature type="binding site" evidence="1">
    <location>
        <position position="113"/>
    </location>
    <ligand>
        <name>substrate</name>
    </ligand>
</feature>
<name>TRUA_LACH4</name>
<proteinExistence type="inferred from homology"/>